<feature type="chain" id="PRO_0000192765" description="Bifunctional uridylyltransferase/uridylyl-removing enzyme">
    <location>
        <begin position="1"/>
        <end position="890"/>
    </location>
</feature>
<feature type="domain" description="HD" evidence="2">
    <location>
        <begin position="468"/>
        <end position="590"/>
    </location>
</feature>
<feature type="domain" description="ACT 1" evidence="1">
    <location>
        <begin position="709"/>
        <end position="790"/>
    </location>
</feature>
<feature type="domain" description="ACT 2" evidence="1">
    <location>
        <begin position="816"/>
        <end position="890"/>
    </location>
</feature>
<feature type="region of interest" description="Uridylyltransferase">
    <location>
        <begin position="1"/>
        <end position="349"/>
    </location>
</feature>
<feature type="region of interest" description="Disordered" evidence="3">
    <location>
        <begin position="1"/>
        <end position="21"/>
    </location>
</feature>
<feature type="region of interest" description="Uridylyl-removing">
    <location>
        <begin position="350"/>
        <end position="708"/>
    </location>
</feature>
<comment type="function">
    <text evidence="1">Modifies, by uridylylation and deuridylylation, the PII regulatory proteins (GlnB and homologs), in response to the nitrogen status of the cell that GlnD senses through the glutamine level. Under low glutamine levels, catalyzes the conversion of the PII proteins and UTP to PII-UMP and PPi, while under higher glutamine levels, GlnD hydrolyzes PII-UMP to PII and UMP (deuridylylation). Thus, controls uridylylation state and activity of the PII proteins, and plays an important role in the regulation of nitrogen assimilation and metabolism.</text>
</comment>
<comment type="catalytic activity">
    <reaction evidence="1">
        <text>[protein-PII]-L-tyrosine + UTP = [protein-PII]-uridylyl-L-tyrosine + diphosphate</text>
        <dbReference type="Rhea" id="RHEA:13673"/>
        <dbReference type="Rhea" id="RHEA-COMP:12147"/>
        <dbReference type="Rhea" id="RHEA-COMP:12148"/>
        <dbReference type="ChEBI" id="CHEBI:33019"/>
        <dbReference type="ChEBI" id="CHEBI:46398"/>
        <dbReference type="ChEBI" id="CHEBI:46858"/>
        <dbReference type="ChEBI" id="CHEBI:90602"/>
        <dbReference type="EC" id="2.7.7.59"/>
    </reaction>
</comment>
<comment type="catalytic activity">
    <reaction evidence="1">
        <text>[protein-PII]-uridylyl-L-tyrosine + H2O = [protein-PII]-L-tyrosine + UMP + H(+)</text>
        <dbReference type="Rhea" id="RHEA:48600"/>
        <dbReference type="Rhea" id="RHEA-COMP:12147"/>
        <dbReference type="Rhea" id="RHEA-COMP:12148"/>
        <dbReference type="ChEBI" id="CHEBI:15377"/>
        <dbReference type="ChEBI" id="CHEBI:15378"/>
        <dbReference type="ChEBI" id="CHEBI:46858"/>
        <dbReference type="ChEBI" id="CHEBI:57865"/>
        <dbReference type="ChEBI" id="CHEBI:90602"/>
    </reaction>
</comment>
<comment type="cofactor">
    <cofactor evidence="1">
        <name>Mg(2+)</name>
        <dbReference type="ChEBI" id="CHEBI:18420"/>
    </cofactor>
</comment>
<comment type="activity regulation">
    <text evidence="1">Uridylyltransferase (UTase) activity is inhibited by glutamine, while glutamine activates uridylyl-removing (UR) activity.</text>
</comment>
<comment type="domain">
    <text evidence="1">Has four distinct domains: an N-terminal nucleotidyltransferase (NT) domain responsible for UTase activity, a central HD domain that encodes UR activity, and two C-terminal ACT domains that seem to have a role in glutamine sensing.</text>
</comment>
<comment type="similarity">
    <text evidence="1">Belongs to the GlnD family.</text>
</comment>
<gene>
    <name evidence="1" type="primary">glnD</name>
    <name type="ordered locus">STY0237</name>
    <name type="ordered locus">t0215</name>
</gene>
<sequence>MNTLPEQHANTALPTLPDQPQNPGVWPRAELTVAGIKARIDIFQHWLGEAFDSGICAEQLIEARTEFIDQLLQRLWIEAGFGQIADLALVAVGGYGRGELHPLSDIDLLILSRKKLPDEQAQKVGELLTLLWDVKLDVGHSVRTLEECLLEGLSDLTVATNLIETRLLIGDVALFLALQKHIFSEGFWPSDKFYAAKVEEQNQRHQRYHGTSYNLEPDIKSSPGGLRDIHTLQWVARRHFGATSLDEMVGFGFLTPAECAELNECLHILWRIRFALHLVVSRYDNRLLFDRQLSVAQRLNYSGEGNDPVERMMKDYFRVTRRVSELNQMLLQLFDEAILALPADEKPRPVDDEFQLRGTLIDLRDDTLFIREPQAILRMFYMMVRNSAITGIYSTTLRHLRHARRHLSQPLCYIPEARTLFLSMLRHPGAVSRGLLPMHRHSVLWAYMPQWSHIVGQMQFDLFHAYTVDEHTIRVMLKLESFAKEETRQRHPLCVDLWPRLPHPELILIAALFHDIAKGRGGDHSVLGAQDVLTFAELHGLNSRETQLVAWLVRQHLLMSVTAQRRDIQDPEVIKQFAEEVQTETRLRFLVCLTVADICATNETLWNSWKQSLLRELYFATEKQLRRGMQNTPDMRERVRHHQLQALALLRMDNIDEAALHKIWTRCRANYFVRHSPNQLAWHARHLLQHDLSQPLVLLSPQATRGGTEIFIWSPDRPYLFAAVCAELDRRNLSVHDAQIFTTRDGMAMDTFIVLEPDGSPLAADRHDVIRTGLEQTITQHSWQPPQPRRQPAKLRHFTVETEVNFLPTHTDRKSFMELIALDQPGLLARVGQIFADLGISLHGARITTIGERVEDLFIIATADRRALNNVLQLEVQQRLTAALNPNDKG</sequence>
<protein>
    <recommendedName>
        <fullName evidence="1">Bifunctional uridylyltransferase/uridylyl-removing enzyme</fullName>
        <shortName evidence="1">UTase/UR</shortName>
    </recommendedName>
    <alternativeName>
        <fullName evidence="1">Bifunctional [protein-PII] modification enzyme</fullName>
    </alternativeName>
    <alternativeName>
        <fullName evidence="1">Bifunctional nitrogen sensor protein</fullName>
    </alternativeName>
    <domain>
        <recommendedName>
            <fullName evidence="1">[Protein-PII] uridylyltransferase</fullName>
            <shortName evidence="1">PII uridylyltransferase</shortName>
            <shortName evidence="1">UTase</shortName>
            <ecNumber evidence="1">2.7.7.59</ecNumber>
        </recommendedName>
    </domain>
    <domain>
        <recommendedName>
            <fullName evidence="1">[Protein-PII]-UMP uridylyl-removing enzyme</fullName>
            <shortName evidence="1">UR</shortName>
            <ecNumber evidence="1">3.1.4.-</ecNumber>
        </recommendedName>
    </domain>
</protein>
<reference key="1">
    <citation type="journal article" date="2001" name="Nature">
        <title>Complete genome sequence of a multiple drug resistant Salmonella enterica serovar Typhi CT18.</title>
        <authorList>
            <person name="Parkhill J."/>
            <person name="Dougan G."/>
            <person name="James K.D."/>
            <person name="Thomson N.R."/>
            <person name="Pickard D."/>
            <person name="Wain J."/>
            <person name="Churcher C.M."/>
            <person name="Mungall K.L."/>
            <person name="Bentley S.D."/>
            <person name="Holden M.T.G."/>
            <person name="Sebaihia M."/>
            <person name="Baker S."/>
            <person name="Basham D."/>
            <person name="Brooks K."/>
            <person name="Chillingworth T."/>
            <person name="Connerton P."/>
            <person name="Cronin A."/>
            <person name="Davis P."/>
            <person name="Davies R.M."/>
            <person name="Dowd L."/>
            <person name="White N."/>
            <person name="Farrar J."/>
            <person name="Feltwell T."/>
            <person name="Hamlin N."/>
            <person name="Haque A."/>
            <person name="Hien T.T."/>
            <person name="Holroyd S."/>
            <person name="Jagels K."/>
            <person name="Krogh A."/>
            <person name="Larsen T.S."/>
            <person name="Leather S."/>
            <person name="Moule S."/>
            <person name="O'Gaora P."/>
            <person name="Parry C."/>
            <person name="Quail M.A."/>
            <person name="Rutherford K.M."/>
            <person name="Simmonds M."/>
            <person name="Skelton J."/>
            <person name="Stevens K."/>
            <person name="Whitehead S."/>
            <person name="Barrell B.G."/>
        </authorList>
    </citation>
    <scope>NUCLEOTIDE SEQUENCE [LARGE SCALE GENOMIC DNA]</scope>
    <source>
        <strain>CT18</strain>
    </source>
</reference>
<reference key="2">
    <citation type="journal article" date="2003" name="J. Bacteriol.">
        <title>Comparative genomics of Salmonella enterica serovar Typhi strains Ty2 and CT18.</title>
        <authorList>
            <person name="Deng W."/>
            <person name="Liou S.-R."/>
            <person name="Plunkett G. III"/>
            <person name="Mayhew G.F."/>
            <person name="Rose D.J."/>
            <person name="Burland V."/>
            <person name="Kodoyianni V."/>
            <person name="Schwartz D.C."/>
            <person name="Blattner F.R."/>
        </authorList>
    </citation>
    <scope>NUCLEOTIDE SEQUENCE [LARGE SCALE GENOMIC DNA]</scope>
    <source>
        <strain>ATCC 700931 / Ty2</strain>
    </source>
</reference>
<evidence type="ECO:0000255" key="1">
    <source>
        <dbReference type="HAMAP-Rule" id="MF_00277"/>
    </source>
</evidence>
<evidence type="ECO:0000255" key="2">
    <source>
        <dbReference type="PROSITE-ProRule" id="PRU01175"/>
    </source>
</evidence>
<evidence type="ECO:0000256" key="3">
    <source>
        <dbReference type="SAM" id="MobiDB-lite"/>
    </source>
</evidence>
<organism>
    <name type="scientific">Salmonella typhi</name>
    <dbReference type="NCBI Taxonomy" id="90370"/>
    <lineage>
        <taxon>Bacteria</taxon>
        <taxon>Pseudomonadati</taxon>
        <taxon>Pseudomonadota</taxon>
        <taxon>Gammaproteobacteria</taxon>
        <taxon>Enterobacterales</taxon>
        <taxon>Enterobacteriaceae</taxon>
        <taxon>Salmonella</taxon>
    </lineage>
</organism>
<accession>Q8Z9A7</accession>
<name>GLND_SALTI</name>
<dbReference type="EC" id="2.7.7.59" evidence="1"/>
<dbReference type="EC" id="3.1.4.-" evidence="1"/>
<dbReference type="EMBL" id="AL513382">
    <property type="protein sequence ID" value="CAD01368.1"/>
    <property type="molecule type" value="Genomic_DNA"/>
</dbReference>
<dbReference type="EMBL" id="AE014613">
    <property type="protein sequence ID" value="AAO67945.1"/>
    <property type="molecule type" value="Genomic_DNA"/>
</dbReference>
<dbReference type="RefSeq" id="NP_454821.1">
    <property type="nucleotide sequence ID" value="NC_003198.1"/>
</dbReference>
<dbReference type="RefSeq" id="WP_001094518.1">
    <property type="nucleotide sequence ID" value="NZ_WSUR01000009.1"/>
</dbReference>
<dbReference type="SMR" id="Q8Z9A7"/>
<dbReference type="STRING" id="220341.gene:17584270"/>
<dbReference type="KEGG" id="stt:t0215"/>
<dbReference type="KEGG" id="sty:STY0237"/>
<dbReference type="PATRIC" id="fig|220341.7.peg.237"/>
<dbReference type="eggNOG" id="COG2844">
    <property type="taxonomic scope" value="Bacteria"/>
</dbReference>
<dbReference type="HOGENOM" id="CLU_012833_0_0_6"/>
<dbReference type="OMA" id="GLMQFDL"/>
<dbReference type="Proteomes" id="UP000000541">
    <property type="component" value="Chromosome"/>
</dbReference>
<dbReference type="Proteomes" id="UP000002670">
    <property type="component" value="Chromosome"/>
</dbReference>
<dbReference type="GO" id="GO:0008773">
    <property type="term" value="F:[protein-PII] uridylyltransferase activity"/>
    <property type="evidence" value="ECO:0007669"/>
    <property type="project" value="UniProtKB-UniRule"/>
</dbReference>
<dbReference type="GO" id="GO:0008081">
    <property type="term" value="F:phosphoric diester hydrolase activity"/>
    <property type="evidence" value="ECO:0007669"/>
    <property type="project" value="UniProtKB-UniRule"/>
</dbReference>
<dbReference type="GO" id="GO:0006808">
    <property type="term" value="P:regulation of nitrogen utilization"/>
    <property type="evidence" value="ECO:0007669"/>
    <property type="project" value="UniProtKB-UniRule"/>
</dbReference>
<dbReference type="CDD" id="cd04899">
    <property type="entry name" value="ACT_ACR-UUR-like_2"/>
    <property type="match status" value="1"/>
</dbReference>
<dbReference type="CDD" id="cd04900">
    <property type="entry name" value="ACT_UUR-like_1"/>
    <property type="match status" value="1"/>
</dbReference>
<dbReference type="CDD" id="cd00077">
    <property type="entry name" value="HDc"/>
    <property type="match status" value="1"/>
</dbReference>
<dbReference type="CDD" id="cd05401">
    <property type="entry name" value="NT_GlnE_GlnD_like"/>
    <property type="match status" value="1"/>
</dbReference>
<dbReference type="FunFam" id="1.10.3210.10:FF:000005">
    <property type="entry name" value="Bifunctional uridylyltransferase/uridylyl-removing enzyme"/>
    <property type="match status" value="1"/>
</dbReference>
<dbReference type="Gene3D" id="1.10.3210.10">
    <property type="entry name" value="Hypothetical protein af1432"/>
    <property type="match status" value="1"/>
</dbReference>
<dbReference type="Gene3D" id="1.20.120.330">
    <property type="entry name" value="Nucleotidyltransferases domain 2"/>
    <property type="match status" value="1"/>
</dbReference>
<dbReference type="HAMAP" id="MF_00277">
    <property type="entry name" value="PII_uridylyl_transf"/>
    <property type="match status" value="1"/>
</dbReference>
<dbReference type="InterPro" id="IPR045865">
    <property type="entry name" value="ACT-like_dom_sf"/>
</dbReference>
<dbReference type="InterPro" id="IPR002912">
    <property type="entry name" value="ACT_dom"/>
</dbReference>
<dbReference type="InterPro" id="IPR003607">
    <property type="entry name" value="HD/PDEase_dom"/>
</dbReference>
<dbReference type="InterPro" id="IPR006674">
    <property type="entry name" value="HD_domain"/>
</dbReference>
<dbReference type="InterPro" id="IPR043519">
    <property type="entry name" value="NT_sf"/>
</dbReference>
<dbReference type="InterPro" id="IPR013546">
    <property type="entry name" value="PII_UdlTrfase/GS_AdlTrfase"/>
</dbReference>
<dbReference type="InterPro" id="IPR002934">
    <property type="entry name" value="Polymerase_NTP_transf_dom"/>
</dbReference>
<dbReference type="InterPro" id="IPR010043">
    <property type="entry name" value="UTase/UR"/>
</dbReference>
<dbReference type="NCBIfam" id="NF002487">
    <property type="entry name" value="PRK01759.1"/>
    <property type="match status" value="1"/>
</dbReference>
<dbReference type="NCBIfam" id="NF003448">
    <property type="entry name" value="PRK05007.1"/>
    <property type="match status" value="1"/>
</dbReference>
<dbReference type="NCBIfam" id="TIGR01693">
    <property type="entry name" value="UTase_glnD"/>
    <property type="match status" value="1"/>
</dbReference>
<dbReference type="PANTHER" id="PTHR47320">
    <property type="entry name" value="BIFUNCTIONAL URIDYLYLTRANSFERASE/URIDYLYL-REMOVING ENZYME"/>
    <property type="match status" value="1"/>
</dbReference>
<dbReference type="PANTHER" id="PTHR47320:SF1">
    <property type="entry name" value="BIFUNCTIONAL URIDYLYLTRANSFERASE_URIDYLYL-REMOVING ENZYME"/>
    <property type="match status" value="1"/>
</dbReference>
<dbReference type="Pfam" id="PF01842">
    <property type="entry name" value="ACT"/>
    <property type="match status" value="2"/>
</dbReference>
<dbReference type="Pfam" id="PF08335">
    <property type="entry name" value="GlnD_UR_UTase"/>
    <property type="match status" value="1"/>
</dbReference>
<dbReference type="Pfam" id="PF01966">
    <property type="entry name" value="HD"/>
    <property type="match status" value="1"/>
</dbReference>
<dbReference type="Pfam" id="PF01909">
    <property type="entry name" value="NTP_transf_2"/>
    <property type="match status" value="1"/>
</dbReference>
<dbReference type="PIRSF" id="PIRSF006288">
    <property type="entry name" value="PII_uridyltransf"/>
    <property type="match status" value="1"/>
</dbReference>
<dbReference type="SMART" id="SM00471">
    <property type="entry name" value="HDc"/>
    <property type="match status" value="1"/>
</dbReference>
<dbReference type="SUPFAM" id="SSF55021">
    <property type="entry name" value="ACT-like"/>
    <property type="match status" value="2"/>
</dbReference>
<dbReference type="SUPFAM" id="SSF109604">
    <property type="entry name" value="HD-domain/PDEase-like"/>
    <property type="match status" value="1"/>
</dbReference>
<dbReference type="SUPFAM" id="SSF81301">
    <property type="entry name" value="Nucleotidyltransferase"/>
    <property type="match status" value="1"/>
</dbReference>
<dbReference type="SUPFAM" id="SSF81593">
    <property type="entry name" value="Nucleotidyltransferase substrate binding subunit/domain"/>
    <property type="match status" value="1"/>
</dbReference>
<dbReference type="PROSITE" id="PS51671">
    <property type="entry name" value="ACT"/>
    <property type="match status" value="2"/>
</dbReference>
<dbReference type="PROSITE" id="PS51831">
    <property type="entry name" value="HD"/>
    <property type="match status" value="1"/>
</dbReference>
<proteinExistence type="inferred from homology"/>
<keyword id="KW-0378">Hydrolase</keyword>
<keyword id="KW-0460">Magnesium</keyword>
<keyword id="KW-0511">Multifunctional enzyme</keyword>
<keyword id="KW-0548">Nucleotidyltransferase</keyword>
<keyword id="KW-0677">Repeat</keyword>
<keyword id="KW-0808">Transferase</keyword>